<name>ZIPA_HAEIE</name>
<protein>
    <recommendedName>
        <fullName evidence="1">Cell division protein ZipA</fullName>
    </recommendedName>
</protein>
<organism>
    <name type="scientific">Haemophilus influenzae (strain PittEE)</name>
    <dbReference type="NCBI Taxonomy" id="374930"/>
    <lineage>
        <taxon>Bacteria</taxon>
        <taxon>Pseudomonadati</taxon>
        <taxon>Pseudomonadota</taxon>
        <taxon>Gammaproteobacteria</taxon>
        <taxon>Pasteurellales</taxon>
        <taxon>Pasteurellaceae</taxon>
        <taxon>Haemophilus</taxon>
    </lineage>
</organism>
<proteinExistence type="inferred from homology"/>
<sequence length="328" mass="36849">MDLNTILIIVGIVALVALIVHGLWSNRREKSKYFDKANKFDRTSLTSRSHTQEEMAQPNNISPNTYVENGHTPIPQPTTEKVPSEAELIDYRQSDKSVDDIKISIPNTQPIYDMGNHRSEPIQPTQPQYDMPTANNVASMTLEQLEEQSRNIGFNGINSSSPELRVQLAELSHEEHQVDYNLSFNEPKAETTAQPKQTTGYIQLYLIPKSSEEFNGAKLVQALENLGFILGKDEMYHRHLDLSVASPVLFSVANLEQPGTFNAYNLAEFNTIGIVFFMQLPSPGNNLANLRMMMRAAHTLAEDLQGVILTEEQEIFDANAEQAYLARV</sequence>
<evidence type="ECO:0000255" key="1">
    <source>
        <dbReference type="HAMAP-Rule" id="MF_00509"/>
    </source>
</evidence>
<evidence type="ECO:0000256" key="2">
    <source>
        <dbReference type="SAM" id="MobiDB-lite"/>
    </source>
</evidence>
<reference key="1">
    <citation type="journal article" date="2007" name="Genome Biol.">
        <title>Characterization and modeling of the Haemophilus influenzae core and supragenomes based on the complete genomic sequences of Rd and 12 clinical nontypeable strains.</title>
        <authorList>
            <person name="Hogg J.S."/>
            <person name="Hu F.Z."/>
            <person name="Janto B."/>
            <person name="Boissy R."/>
            <person name="Hayes J."/>
            <person name="Keefe R."/>
            <person name="Post J.C."/>
            <person name="Ehrlich G.D."/>
        </authorList>
    </citation>
    <scope>NUCLEOTIDE SEQUENCE [LARGE SCALE GENOMIC DNA]</scope>
    <source>
        <strain>PittEE</strain>
    </source>
</reference>
<dbReference type="EMBL" id="CP000671">
    <property type="protein sequence ID" value="ABQ98654.1"/>
    <property type="molecule type" value="Genomic_DNA"/>
</dbReference>
<dbReference type="SMR" id="A5UD03"/>
<dbReference type="KEGG" id="hip:CGSHiEE_06555"/>
<dbReference type="HOGENOM" id="CLU_030174_1_0_6"/>
<dbReference type="GO" id="GO:0032153">
    <property type="term" value="C:cell division site"/>
    <property type="evidence" value="ECO:0007669"/>
    <property type="project" value="UniProtKB-UniRule"/>
</dbReference>
<dbReference type="GO" id="GO:0005886">
    <property type="term" value="C:plasma membrane"/>
    <property type="evidence" value="ECO:0007669"/>
    <property type="project" value="UniProtKB-SubCell"/>
</dbReference>
<dbReference type="GO" id="GO:0000917">
    <property type="term" value="P:division septum assembly"/>
    <property type="evidence" value="ECO:0007669"/>
    <property type="project" value="TreeGrafter"/>
</dbReference>
<dbReference type="GO" id="GO:0043093">
    <property type="term" value="P:FtsZ-dependent cytokinesis"/>
    <property type="evidence" value="ECO:0007669"/>
    <property type="project" value="UniProtKB-UniRule"/>
</dbReference>
<dbReference type="CDD" id="cd00231">
    <property type="entry name" value="ZipA"/>
    <property type="match status" value="1"/>
</dbReference>
<dbReference type="Gene3D" id="3.30.1400.10">
    <property type="entry name" value="ZipA, C-terminal FtsZ-binding domain"/>
    <property type="match status" value="1"/>
</dbReference>
<dbReference type="HAMAP" id="MF_00509">
    <property type="entry name" value="ZipA"/>
    <property type="match status" value="1"/>
</dbReference>
<dbReference type="InterPro" id="IPR011919">
    <property type="entry name" value="Cell_div_ZipA"/>
</dbReference>
<dbReference type="InterPro" id="IPR007449">
    <property type="entry name" value="ZipA_FtsZ-bd_C"/>
</dbReference>
<dbReference type="InterPro" id="IPR036765">
    <property type="entry name" value="ZipA_FtsZ-bd_C_sf"/>
</dbReference>
<dbReference type="NCBIfam" id="TIGR02205">
    <property type="entry name" value="septum_zipA"/>
    <property type="match status" value="1"/>
</dbReference>
<dbReference type="PANTHER" id="PTHR38685">
    <property type="entry name" value="CELL DIVISION PROTEIN ZIPA"/>
    <property type="match status" value="1"/>
</dbReference>
<dbReference type="PANTHER" id="PTHR38685:SF1">
    <property type="entry name" value="CELL DIVISION PROTEIN ZIPA"/>
    <property type="match status" value="1"/>
</dbReference>
<dbReference type="Pfam" id="PF04354">
    <property type="entry name" value="ZipA_C"/>
    <property type="match status" value="1"/>
</dbReference>
<dbReference type="SMART" id="SM00771">
    <property type="entry name" value="ZipA_C"/>
    <property type="match status" value="1"/>
</dbReference>
<dbReference type="SUPFAM" id="SSF64383">
    <property type="entry name" value="Cell-division protein ZipA, C-terminal domain"/>
    <property type="match status" value="1"/>
</dbReference>
<accession>A5UD03</accession>
<comment type="function">
    <text evidence="1">Essential cell division protein that stabilizes the FtsZ protofilaments by cross-linking them and that serves as a cytoplasmic membrane anchor for the Z ring. Also required for the recruitment to the septal ring of downstream cell division proteins.</text>
</comment>
<comment type="subunit">
    <text evidence="1">Interacts with FtsZ via their C-terminal domains.</text>
</comment>
<comment type="subcellular location">
    <subcellularLocation>
        <location evidence="1">Cell inner membrane</location>
        <topology evidence="1">Single-pass type I membrane protein</topology>
    </subcellularLocation>
    <text evidence="1">Localizes to the Z ring in an FtsZ-dependent manner.</text>
</comment>
<comment type="similarity">
    <text evidence="1">Belongs to the ZipA family.</text>
</comment>
<gene>
    <name evidence="1" type="primary">zipA</name>
    <name type="ordered locus">CGSHiEE_06555</name>
</gene>
<feature type="chain" id="PRO_1000015142" description="Cell division protein ZipA">
    <location>
        <begin position="1"/>
        <end position="328"/>
    </location>
</feature>
<feature type="topological domain" description="Periplasmic" evidence="1">
    <location>
        <begin position="1"/>
        <end position="4"/>
    </location>
</feature>
<feature type="transmembrane region" description="Helical" evidence="1">
    <location>
        <begin position="5"/>
        <end position="25"/>
    </location>
</feature>
<feature type="topological domain" description="Cytoplasmic" evidence="1">
    <location>
        <begin position="26"/>
        <end position="328"/>
    </location>
</feature>
<feature type="region of interest" description="Disordered" evidence="2">
    <location>
        <begin position="43"/>
        <end position="82"/>
    </location>
</feature>
<feature type="compositionally biased region" description="Polar residues" evidence="2">
    <location>
        <begin position="57"/>
        <end position="67"/>
    </location>
</feature>
<keyword id="KW-0131">Cell cycle</keyword>
<keyword id="KW-0132">Cell division</keyword>
<keyword id="KW-0997">Cell inner membrane</keyword>
<keyword id="KW-1003">Cell membrane</keyword>
<keyword id="KW-0472">Membrane</keyword>
<keyword id="KW-0812">Transmembrane</keyword>
<keyword id="KW-1133">Transmembrane helix</keyword>